<keyword id="KW-0963">Cytoplasm</keyword>
<keyword id="KW-0342">GTP-binding</keyword>
<keyword id="KW-0378">Hydrolase</keyword>
<keyword id="KW-0460">Magnesium</keyword>
<keyword id="KW-0479">Metal-binding</keyword>
<keyword id="KW-0547">Nucleotide-binding</keyword>
<evidence type="ECO:0000255" key="1">
    <source>
        <dbReference type="HAMAP-Rule" id="MF_01454"/>
    </source>
</evidence>
<evidence type="ECO:0000255" key="2">
    <source>
        <dbReference type="PROSITE-ProRule" id="PRU01231"/>
    </source>
</evidence>
<feature type="chain" id="PRO_0000385936" description="GTPase Obg">
    <location>
        <begin position="1"/>
        <end position="334"/>
    </location>
</feature>
<feature type="domain" description="Obg" evidence="2">
    <location>
        <begin position="1"/>
        <end position="159"/>
    </location>
</feature>
<feature type="domain" description="OBG-type G" evidence="1">
    <location>
        <begin position="160"/>
        <end position="331"/>
    </location>
</feature>
<feature type="binding site" evidence="1">
    <location>
        <begin position="166"/>
        <end position="173"/>
    </location>
    <ligand>
        <name>GTP</name>
        <dbReference type="ChEBI" id="CHEBI:37565"/>
    </ligand>
</feature>
<feature type="binding site" evidence="1">
    <location>
        <position position="173"/>
    </location>
    <ligand>
        <name>Mg(2+)</name>
        <dbReference type="ChEBI" id="CHEBI:18420"/>
    </ligand>
</feature>
<feature type="binding site" evidence="1">
    <location>
        <begin position="191"/>
        <end position="195"/>
    </location>
    <ligand>
        <name>GTP</name>
        <dbReference type="ChEBI" id="CHEBI:37565"/>
    </ligand>
</feature>
<feature type="binding site" evidence="1">
    <location>
        <position position="193"/>
    </location>
    <ligand>
        <name>Mg(2+)</name>
        <dbReference type="ChEBI" id="CHEBI:18420"/>
    </ligand>
</feature>
<feature type="binding site" evidence="1">
    <location>
        <begin position="212"/>
        <end position="215"/>
    </location>
    <ligand>
        <name>GTP</name>
        <dbReference type="ChEBI" id="CHEBI:37565"/>
    </ligand>
</feature>
<feature type="binding site" evidence="1">
    <location>
        <begin position="282"/>
        <end position="285"/>
    </location>
    <ligand>
        <name>GTP</name>
        <dbReference type="ChEBI" id="CHEBI:37565"/>
    </ligand>
</feature>
<feature type="binding site" evidence="1">
    <location>
        <begin position="312"/>
        <end position="314"/>
    </location>
    <ligand>
        <name>GTP</name>
        <dbReference type="ChEBI" id="CHEBI:37565"/>
    </ligand>
</feature>
<protein>
    <recommendedName>
        <fullName evidence="1">GTPase Obg</fullName>
        <ecNumber evidence="1">3.6.5.-</ecNumber>
    </recommendedName>
    <alternativeName>
        <fullName evidence="1">GTP-binding protein Obg</fullName>
    </alternativeName>
</protein>
<gene>
    <name evidence="1" type="primary">obg</name>
    <name type="ordered locus">FTA_1981</name>
</gene>
<reference key="1">
    <citation type="journal article" date="2009" name="PLoS ONE">
        <title>Complete genome sequence of Francisella tularensis subspecies holarctica FTNF002-00.</title>
        <authorList>
            <person name="Barabote R.D."/>
            <person name="Xie G."/>
            <person name="Brettin T.S."/>
            <person name="Hinrichs S.H."/>
            <person name="Fey P.D."/>
            <person name="Jay J.J."/>
            <person name="Engle J.L."/>
            <person name="Godbole S.D."/>
            <person name="Noronha J.M."/>
            <person name="Scheuermann R.H."/>
            <person name="Zhou L.W."/>
            <person name="Lion C."/>
            <person name="Dempsey M.P."/>
        </authorList>
    </citation>
    <scope>NUCLEOTIDE SEQUENCE [LARGE SCALE GENOMIC DNA]</scope>
    <source>
        <strain>FTNF002-00 / FTA</strain>
    </source>
</reference>
<proteinExistence type="inferred from homology"/>
<sequence>MRFVDEVVIKLQAGKGGNGCVSFRREKYVPCGGPDGGDGGNGGSIYLKADENVNTLIDYRYKREYYAENGRPGEGRNCYGKAGEDLYLVVPVGTSVFDIDTNKKIGEVLQHGQTFKLVSGGKRGIGNTHFKSSTNQAPRKFTLGEEGEYKEVRLELNLLADVALLGLPNAGKSTLIRSVSEATPKVADYPFTTMYPHLGVVKVGVDSFVMADIPGVIEGAAEGAGLGLRFLKHLTRARCVLHVVDICPFNESDPVENYFAVEKELEKYSQELFDKLRFLVINKIDLLADKVEQKCQEFVEQIGYQGNYYTISAAMKKGTDELAKKLNEFLQKQE</sequence>
<accession>A7NEQ3</accession>
<name>OBG_FRATF</name>
<comment type="function">
    <text evidence="1">An essential GTPase which binds GTP, GDP and possibly (p)ppGpp with moderate affinity, with high nucleotide exchange rates and a fairly low GTP hydrolysis rate. Plays a role in control of the cell cycle, stress response, ribosome biogenesis and in those bacteria that undergo differentiation, in morphogenesis control.</text>
</comment>
<comment type="cofactor">
    <cofactor evidence="1">
        <name>Mg(2+)</name>
        <dbReference type="ChEBI" id="CHEBI:18420"/>
    </cofactor>
</comment>
<comment type="subunit">
    <text evidence="1">Monomer.</text>
</comment>
<comment type="subcellular location">
    <subcellularLocation>
        <location evidence="1">Cytoplasm</location>
    </subcellularLocation>
</comment>
<comment type="similarity">
    <text evidence="1">Belongs to the TRAFAC class OBG-HflX-like GTPase superfamily. OBG GTPase family.</text>
</comment>
<organism>
    <name type="scientific">Francisella tularensis subsp. holarctica (strain FTNF002-00 / FTA)</name>
    <dbReference type="NCBI Taxonomy" id="458234"/>
    <lineage>
        <taxon>Bacteria</taxon>
        <taxon>Pseudomonadati</taxon>
        <taxon>Pseudomonadota</taxon>
        <taxon>Gammaproteobacteria</taxon>
        <taxon>Thiotrichales</taxon>
        <taxon>Francisellaceae</taxon>
        <taxon>Francisella</taxon>
    </lineage>
</organism>
<dbReference type="EC" id="3.6.5.-" evidence="1"/>
<dbReference type="EMBL" id="CP000803">
    <property type="protein sequence ID" value="ABU62456.1"/>
    <property type="molecule type" value="Genomic_DNA"/>
</dbReference>
<dbReference type="SMR" id="A7NEQ3"/>
<dbReference type="KEGG" id="fta:FTA_1981"/>
<dbReference type="HOGENOM" id="CLU_011747_2_0_6"/>
<dbReference type="GO" id="GO:0005737">
    <property type="term" value="C:cytoplasm"/>
    <property type="evidence" value="ECO:0007669"/>
    <property type="project" value="UniProtKB-SubCell"/>
</dbReference>
<dbReference type="GO" id="GO:0005525">
    <property type="term" value="F:GTP binding"/>
    <property type="evidence" value="ECO:0007669"/>
    <property type="project" value="UniProtKB-UniRule"/>
</dbReference>
<dbReference type="GO" id="GO:0003924">
    <property type="term" value="F:GTPase activity"/>
    <property type="evidence" value="ECO:0007669"/>
    <property type="project" value="UniProtKB-UniRule"/>
</dbReference>
<dbReference type="GO" id="GO:0000287">
    <property type="term" value="F:magnesium ion binding"/>
    <property type="evidence" value="ECO:0007669"/>
    <property type="project" value="InterPro"/>
</dbReference>
<dbReference type="GO" id="GO:0042254">
    <property type="term" value="P:ribosome biogenesis"/>
    <property type="evidence" value="ECO:0007669"/>
    <property type="project" value="UniProtKB-UniRule"/>
</dbReference>
<dbReference type="CDD" id="cd01898">
    <property type="entry name" value="Obg"/>
    <property type="match status" value="1"/>
</dbReference>
<dbReference type="FunFam" id="2.70.210.12:FF:000001">
    <property type="entry name" value="GTPase Obg"/>
    <property type="match status" value="1"/>
</dbReference>
<dbReference type="Gene3D" id="2.70.210.12">
    <property type="entry name" value="GTP1/OBG domain"/>
    <property type="match status" value="1"/>
</dbReference>
<dbReference type="Gene3D" id="3.40.50.300">
    <property type="entry name" value="P-loop containing nucleotide triphosphate hydrolases"/>
    <property type="match status" value="1"/>
</dbReference>
<dbReference type="HAMAP" id="MF_01454">
    <property type="entry name" value="GTPase_Obg"/>
    <property type="match status" value="1"/>
</dbReference>
<dbReference type="InterPro" id="IPR031167">
    <property type="entry name" value="G_OBG"/>
</dbReference>
<dbReference type="InterPro" id="IPR006073">
    <property type="entry name" value="GTP-bd"/>
</dbReference>
<dbReference type="InterPro" id="IPR014100">
    <property type="entry name" value="GTP-bd_Obg/CgtA"/>
</dbReference>
<dbReference type="InterPro" id="IPR006074">
    <property type="entry name" value="GTP1-OBG_CS"/>
</dbReference>
<dbReference type="InterPro" id="IPR006169">
    <property type="entry name" value="GTP1_OBG_dom"/>
</dbReference>
<dbReference type="InterPro" id="IPR036726">
    <property type="entry name" value="GTP1_OBG_dom_sf"/>
</dbReference>
<dbReference type="InterPro" id="IPR045086">
    <property type="entry name" value="OBG_GTPase"/>
</dbReference>
<dbReference type="InterPro" id="IPR027417">
    <property type="entry name" value="P-loop_NTPase"/>
</dbReference>
<dbReference type="NCBIfam" id="TIGR02729">
    <property type="entry name" value="Obg_CgtA"/>
    <property type="match status" value="1"/>
</dbReference>
<dbReference type="NCBIfam" id="NF008955">
    <property type="entry name" value="PRK12297.1"/>
    <property type="match status" value="1"/>
</dbReference>
<dbReference type="NCBIfam" id="NF008956">
    <property type="entry name" value="PRK12299.1"/>
    <property type="match status" value="1"/>
</dbReference>
<dbReference type="PANTHER" id="PTHR11702">
    <property type="entry name" value="DEVELOPMENTALLY REGULATED GTP-BINDING PROTEIN-RELATED"/>
    <property type="match status" value="1"/>
</dbReference>
<dbReference type="PANTHER" id="PTHR11702:SF31">
    <property type="entry name" value="MITOCHONDRIAL RIBOSOME-ASSOCIATED GTPASE 2"/>
    <property type="match status" value="1"/>
</dbReference>
<dbReference type="Pfam" id="PF01018">
    <property type="entry name" value="GTP1_OBG"/>
    <property type="match status" value="1"/>
</dbReference>
<dbReference type="Pfam" id="PF01926">
    <property type="entry name" value="MMR_HSR1"/>
    <property type="match status" value="1"/>
</dbReference>
<dbReference type="PIRSF" id="PIRSF002401">
    <property type="entry name" value="GTP_bd_Obg/CgtA"/>
    <property type="match status" value="1"/>
</dbReference>
<dbReference type="PRINTS" id="PR00326">
    <property type="entry name" value="GTP1OBG"/>
</dbReference>
<dbReference type="SUPFAM" id="SSF82051">
    <property type="entry name" value="Obg GTP-binding protein N-terminal domain"/>
    <property type="match status" value="1"/>
</dbReference>
<dbReference type="SUPFAM" id="SSF52540">
    <property type="entry name" value="P-loop containing nucleoside triphosphate hydrolases"/>
    <property type="match status" value="1"/>
</dbReference>
<dbReference type="PROSITE" id="PS51710">
    <property type="entry name" value="G_OBG"/>
    <property type="match status" value="1"/>
</dbReference>
<dbReference type="PROSITE" id="PS00905">
    <property type="entry name" value="GTP1_OBG"/>
    <property type="match status" value="1"/>
</dbReference>
<dbReference type="PROSITE" id="PS51883">
    <property type="entry name" value="OBG"/>
    <property type="match status" value="1"/>
</dbReference>